<name>MURI_CLONN</name>
<protein>
    <recommendedName>
        <fullName evidence="1">Glutamate racemase</fullName>
        <ecNumber evidence="1">5.1.1.3</ecNumber>
    </recommendedName>
</protein>
<accession>A0Q3B8</accession>
<reference key="1">
    <citation type="journal article" date="2006" name="Nat. Biotechnol.">
        <title>The genome and transcriptomes of the anti-tumor agent Clostridium novyi-NT.</title>
        <authorList>
            <person name="Bettegowda C."/>
            <person name="Huang X."/>
            <person name="Lin J."/>
            <person name="Cheong I."/>
            <person name="Kohli M."/>
            <person name="Szabo S.A."/>
            <person name="Zhang X."/>
            <person name="Diaz L.A. Jr."/>
            <person name="Velculescu V.E."/>
            <person name="Parmigiani G."/>
            <person name="Kinzler K.W."/>
            <person name="Vogelstein B."/>
            <person name="Zhou S."/>
        </authorList>
    </citation>
    <scope>NUCLEOTIDE SEQUENCE [LARGE SCALE GENOMIC DNA]</scope>
    <source>
        <strain>NT</strain>
    </source>
</reference>
<feature type="chain" id="PRO_1000047559" description="Glutamate racemase">
    <location>
        <begin position="1"/>
        <end position="259"/>
    </location>
</feature>
<feature type="active site" description="Proton donor/acceptor" evidence="1">
    <location>
        <position position="75"/>
    </location>
</feature>
<feature type="active site" description="Proton donor/acceptor" evidence="1">
    <location>
        <position position="186"/>
    </location>
</feature>
<feature type="binding site" evidence="1">
    <location>
        <begin position="12"/>
        <end position="13"/>
    </location>
    <ligand>
        <name>substrate</name>
    </ligand>
</feature>
<feature type="binding site" evidence="1">
    <location>
        <begin position="44"/>
        <end position="45"/>
    </location>
    <ligand>
        <name>substrate</name>
    </ligand>
</feature>
<feature type="binding site" evidence="1">
    <location>
        <begin position="76"/>
        <end position="77"/>
    </location>
    <ligand>
        <name>substrate</name>
    </ligand>
</feature>
<feature type="binding site" evidence="1">
    <location>
        <begin position="187"/>
        <end position="188"/>
    </location>
    <ligand>
        <name>substrate</name>
    </ligand>
</feature>
<keyword id="KW-0133">Cell shape</keyword>
<keyword id="KW-0961">Cell wall biogenesis/degradation</keyword>
<keyword id="KW-0413">Isomerase</keyword>
<keyword id="KW-0573">Peptidoglycan synthesis</keyword>
<keyword id="KW-1185">Reference proteome</keyword>
<sequence length="259" mass="28560">MDITKMPIGFFDSGVGGLSVLREAIKVLPNEDFIYFGDSKNAPYGTKTVDEVKKLTFNAVEFLLGHNVKAVVIACNTATSAAIEDLRNSYKDIPIIGIEPALKPAVELNKKGKIVVMATPMTLAEKKFNDLMAKYKGRSEMVSLPCPGLVEYVEKGIVKGQELNNYLQKKLSIIDKKEISSVVLGCTHYPFIKEELSKILGEDVVIIDGSLGTSIQLKRKLIKNKSLNLQDKKGTVKIFNSLDNNEEIIKISKKLLGII</sequence>
<gene>
    <name evidence="1" type="primary">murI</name>
    <name type="ordered locus">NT01CX_0654</name>
</gene>
<proteinExistence type="inferred from homology"/>
<organism>
    <name type="scientific">Clostridium novyi (strain NT)</name>
    <dbReference type="NCBI Taxonomy" id="386415"/>
    <lineage>
        <taxon>Bacteria</taxon>
        <taxon>Bacillati</taxon>
        <taxon>Bacillota</taxon>
        <taxon>Clostridia</taxon>
        <taxon>Eubacteriales</taxon>
        <taxon>Clostridiaceae</taxon>
        <taxon>Clostridium</taxon>
    </lineage>
</organism>
<dbReference type="EC" id="5.1.1.3" evidence="1"/>
<dbReference type="EMBL" id="CP000382">
    <property type="protein sequence ID" value="ABK62576.1"/>
    <property type="molecule type" value="Genomic_DNA"/>
</dbReference>
<dbReference type="RefSeq" id="WP_011723099.1">
    <property type="nucleotide sequence ID" value="NC_008593.1"/>
</dbReference>
<dbReference type="SMR" id="A0Q3B8"/>
<dbReference type="STRING" id="386415.NT01CX_0654"/>
<dbReference type="KEGG" id="cno:NT01CX_0654"/>
<dbReference type="eggNOG" id="COG0796">
    <property type="taxonomic scope" value="Bacteria"/>
</dbReference>
<dbReference type="HOGENOM" id="CLU_052344_1_0_9"/>
<dbReference type="UniPathway" id="UPA00219"/>
<dbReference type="Proteomes" id="UP000008220">
    <property type="component" value="Chromosome"/>
</dbReference>
<dbReference type="GO" id="GO:0008881">
    <property type="term" value="F:glutamate racemase activity"/>
    <property type="evidence" value="ECO:0007669"/>
    <property type="project" value="UniProtKB-UniRule"/>
</dbReference>
<dbReference type="GO" id="GO:0071555">
    <property type="term" value="P:cell wall organization"/>
    <property type="evidence" value="ECO:0007669"/>
    <property type="project" value="UniProtKB-KW"/>
</dbReference>
<dbReference type="GO" id="GO:0009252">
    <property type="term" value="P:peptidoglycan biosynthetic process"/>
    <property type="evidence" value="ECO:0007669"/>
    <property type="project" value="UniProtKB-UniRule"/>
</dbReference>
<dbReference type="GO" id="GO:0008360">
    <property type="term" value="P:regulation of cell shape"/>
    <property type="evidence" value="ECO:0007669"/>
    <property type="project" value="UniProtKB-KW"/>
</dbReference>
<dbReference type="FunFam" id="3.40.50.1860:FF:000002">
    <property type="entry name" value="Glutamate racemase"/>
    <property type="match status" value="1"/>
</dbReference>
<dbReference type="Gene3D" id="3.40.50.1860">
    <property type="match status" value="2"/>
</dbReference>
<dbReference type="HAMAP" id="MF_00258">
    <property type="entry name" value="Glu_racemase"/>
    <property type="match status" value="1"/>
</dbReference>
<dbReference type="InterPro" id="IPR015942">
    <property type="entry name" value="Asp/Glu/hydantoin_racemase"/>
</dbReference>
<dbReference type="InterPro" id="IPR001920">
    <property type="entry name" value="Asp/Glu_race"/>
</dbReference>
<dbReference type="InterPro" id="IPR018187">
    <property type="entry name" value="Asp/Glu_racemase_AS_1"/>
</dbReference>
<dbReference type="InterPro" id="IPR033134">
    <property type="entry name" value="Asp/Glu_racemase_AS_2"/>
</dbReference>
<dbReference type="InterPro" id="IPR004391">
    <property type="entry name" value="Glu_race"/>
</dbReference>
<dbReference type="NCBIfam" id="TIGR00067">
    <property type="entry name" value="glut_race"/>
    <property type="match status" value="1"/>
</dbReference>
<dbReference type="PANTHER" id="PTHR21198">
    <property type="entry name" value="GLUTAMATE RACEMASE"/>
    <property type="match status" value="1"/>
</dbReference>
<dbReference type="PANTHER" id="PTHR21198:SF3">
    <property type="entry name" value="GLUTAMATE RACEMASE"/>
    <property type="match status" value="1"/>
</dbReference>
<dbReference type="Pfam" id="PF01177">
    <property type="entry name" value="Asp_Glu_race"/>
    <property type="match status" value="1"/>
</dbReference>
<dbReference type="SUPFAM" id="SSF53681">
    <property type="entry name" value="Aspartate/glutamate racemase"/>
    <property type="match status" value="2"/>
</dbReference>
<dbReference type="PROSITE" id="PS00923">
    <property type="entry name" value="ASP_GLU_RACEMASE_1"/>
    <property type="match status" value="1"/>
</dbReference>
<dbReference type="PROSITE" id="PS00924">
    <property type="entry name" value="ASP_GLU_RACEMASE_2"/>
    <property type="match status" value="1"/>
</dbReference>
<evidence type="ECO:0000255" key="1">
    <source>
        <dbReference type="HAMAP-Rule" id="MF_00258"/>
    </source>
</evidence>
<comment type="function">
    <text evidence="1">Provides the (R)-glutamate required for cell wall biosynthesis.</text>
</comment>
<comment type="catalytic activity">
    <reaction evidence="1">
        <text>L-glutamate = D-glutamate</text>
        <dbReference type="Rhea" id="RHEA:12813"/>
        <dbReference type="ChEBI" id="CHEBI:29985"/>
        <dbReference type="ChEBI" id="CHEBI:29986"/>
        <dbReference type="EC" id="5.1.1.3"/>
    </reaction>
</comment>
<comment type="pathway">
    <text evidence="1">Cell wall biogenesis; peptidoglycan biosynthesis.</text>
</comment>
<comment type="similarity">
    <text evidence="1">Belongs to the aspartate/glutamate racemases family.</text>
</comment>